<feature type="initiator methionine" description="Removed" evidence="2">
    <location>
        <position position="1"/>
    </location>
</feature>
<feature type="chain" id="PRO_0000152622" description="Lysine--tRNA ligase">
    <location>
        <begin position="2"/>
        <end position="505"/>
    </location>
</feature>
<feature type="binding site" evidence="1">
    <location>
        <position position="415"/>
    </location>
    <ligand>
        <name>Mg(2+)</name>
        <dbReference type="ChEBI" id="CHEBI:18420"/>
        <label>1</label>
    </ligand>
</feature>
<feature type="binding site" evidence="1">
    <location>
        <position position="422"/>
    </location>
    <ligand>
        <name>Mg(2+)</name>
        <dbReference type="ChEBI" id="CHEBI:18420"/>
        <label>1</label>
    </ligand>
</feature>
<feature type="binding site" evidence="1">
    <location>
        <position position="422"/>
    </location>
    <ligand>
        <name>Mg(2+)</name>
        <dbReference type="ChEBI" id="CHEBI:18420"/>
        <label>2</label>
    </ligand>
</feature>
<feature type="helix" evidence="4">
    <location>
        <begin position="14"/>
        <end position="32"/>
    </location>
</feature>
<feature type="helix" evidence="4">
    <location>
        <begin position="46"/>
        <end position="53"/>
    </location>
</feature>
<feature type="helix" evidence="4">
    <location>
        <begin position="58"/>
        <end position="64"/>
    </location>
</feature>
<feature type="strand" evidence="4">
    <location>
        <begin position="67"/>
        <end position="79"/>
    </location>
</feature>
<feature type="strand" evidence="4">
    <location>
        <begin position="81"/>
        <end position="90"/>
    </location>
</feature>
<feature type="strand" evidence="4">
    <location>
        <begin position="93"/>
        <end position="100"/>
    </location>
</feature>
<feature type="turn" evidence="4">
    <location>
        <begin position="101"/>
        <end position="103"/>
    </location>
</feature>
<feature type="helix" evidence="4">
    <location>
        <begin position="108"/>
        <end position="111"/>
    </location>
</feature>
<feature type="helix" evidence="4">
    <location>
        <begin position="113"/>
        <end position="115"/>
    </location>
</feature>
<feature type="strand" evidence="6">
    <location>
        <begin position="118"/>
        <end position="120"/>
    </location>
</feature>
<feature type="strand" evidence="4">
    <location>
        <begin position="121"/>
        <end position="130"/>
    </location>
</feature>
<feature type="strand" evidence="6">
    <location>
        <begin position="131"/>
        <end position="135"/>
    </location>
</feature>
<feature type="strand" evidence="4">
    <location>
        <begin position="136"/>
        <end position="147"/>
    </location>
</feature>
<feature type="helix" evidence="4">
    <location>
        <begin position="165"/>
        <end position="168"/>
    </location>
</feature>
<feature type="helix" evidence="4">
    <location>
        <begin position="170"/>
        <end position="176"/>
    </location>
</feature>
<feature type="helix" evidence="4">
    <location>
        <begin position="178"/>
        <end position="199"/>
    </location>
</feature>
<feature type="turn" evidence="4">
    <location>
        <begin position="200"/>
        <end position="202"/>
    </location>
</feature>
<feature type="strand" evidence="4">
    <location>
        <begin position="210"/>
        <end position="214"/>
    </location>
</feature>
<feature type="strand" evidence="4">
    <location>
        <begin position="224"/>
        <end position="227"/>
    </location>
</feature>
<feature type="turn" evidence="4">
    <location>
        <begin position="228"/>
        <end position="231"/>
    </location>
</feature>
<feature type="strand" evidence="4">
    <location>
        <begin position="232"/>
        <end position="236"/>
    </location>
</feature>
<feature type="helix" evidence="4">
    <location>
        <begin position="241"/>
        <end position="249"/>
    </location>
</feature>
<feature type="strand" evidence="4">
    <location>
        <begin position="254"/>
        <end position="262"/>
    </location>
</feature>
<feature type="strand" evidence="4">
    <location>
        <begin position="273"/>
        <end position="284"/>
    </location>
</feature>
<feature type="helix" evidence="4">
    <location>
        <begin position="287"/>
        <end position="306"/>
    </location>
</feature>
<feature type="strand" evidence="4">
    <location>
        <begin position="309"/>
        <end position="313"/>
    </location>
</feature>
<feature type="strand" evidence="4">
    <location>
        <begin position="316"/>
        <end position="322"/>
    </location>
</feature>
<feature type="strand" evidence="4">
    <location>
        <begin position="325"/>
        <end position="328"/>
    </location>
</feature>
<feature type="helix" evidence="4">
    <location>
        <begin position="329"/>
        <end position="336"/>
    </location>
</feature>
<feature type="helix" evidence="4">
    <location>
        <begin position="342"/>
        <end position="346"/>
    </location>
</feature>
<feature type="helix" evidence="4">
    <location>
        <begin position="348"/>
        <end position="357"/>
    </location>
</feature>
<feature type="helix" evidence="4">
    <location>
        <begin position="368"/>
        <end position="380"/>
    </location>
</feature>
<feature type="helix" evidence="4">
    <location>
        <begin position="381"/>
        <end position="383"/>
    </location>
</feature>
<feature type="strand" evidence="4">
    <location>
        <begin position="386"/>
        <end position="394"/>
    </location>
</feature>
<feature type="helix" evidence="4">
    <location>
        <begin position="395"/>
        <end position="397"/>
    </location>
</feature>
<feature type="strand" evidence="5">
    <location>
        <begin position="399"/>
        <end position="401"/>
    </location>
</feature>
<feature type="strand" evidence="4">
    <location>
        <begin position="410"/>
        <end position="418"/>
    </location>
</feature>
<feature type="strand" evidence="4">
    <location>
        <begin position="421"/>
        <end position="429"/>
    </location>
</feature>
<feature type="helix" evidence="4">
    <location>
        <begin position="433"/>
        <end position="448"/>
    </location>
</feature>
<feature type="helix" evidence="4">
    <location>
        <begin position="459"/>
        <end position="466"/>
    </location>
</feature>
<feature type="strand" evidence="4">
    <location>
        <begin position="471"/>
        <end position="478"/>
    </location>
</feature>
<feature type="helix" evidence="4">
    <location>
        <begin position="479"/>
        <end position="487"/>
    </location>
</feature>
<feature type="helix" evidence="4">
    <location>
        <begin position="492"/>
        <end position="494"/>
    </location>
</feature>
<feature type="strand" evidence="5">
    <location>
        <begin position="496"/>
        <end position="498"/>
    </location>
</feature>
<keyword id="KW-0002">3D-structure</keyword>
<keyword id="KW-0030">Aminoacyl-tRNA synthetase</keyword>
<keyword id="KW-0067">ATP-binding</keyword>
<keyword id="KW-0963">Cytoplasm</keyword>
<keyword id="KW-0903">Direct protein sequencing</keyword>
<keyword id="KW-0436">Ligase</keyword>
<keyword id="KW-0460">Magnesium</keyword>
<keyword id="KW-0479">Metal-binding</keyword>
<keyword id="KW-0547">Nucleotide-binding</keyword>
<keyword id="KW-0648">Protein biosynthesis</keyword>
<keyword id="KW-1185">Reference proteome</keyword>
<name>SYK1_ECOLI</name>
<protein>
    <recommendedName>
        <fullName>Lysine--tRNA ligase</fullName>
        <ecNumber>6.1.1.6</ecNumber>
    </recommendedName>
    <alternativeName>
        <fullName>Lysyl-tRNA synthetase</fullName>
        <shortName>LysRS</shortName>
    </alternativeName>
</protein>
<dbReference type="EC" id="6.1.1.6"/>
<dbReference type="EMBL" id="J03795">
    <property type="protein sequence ID" value="AAA23959.1"/>
    <property type="molecule type" value="Genomic_DNA"/>
</dbReference>
<dbReference type="EMBL" id="U28375">
    <property type="protein sequence ID" value="AAA83071.1"/>
    <property type="molecule type" value="Genomic_DNA"/>
</dbReference>
<dbReference type="EMBL" id="U00096">
    <property type="protein sequence ID" value="AAC75928.1"/>
    <property type="molecule type" value="Genomic_DNA"/>
</dbReference>
<dbReference type="EMBL" id="AP009048">
    <property type="protein sequence ID" value="BAE76955.1"/>
    <property type="molecule type" value="Genomic_DNA"/>
</dbReference>
<dbReference type="PIR" id="B65073">
    <property type="entry name" value="SYECKT"/>
</dbReference>
<dbReference type="RefSeq" id="NP_417366.1">
    <property type="nucleotide sequence ID" value="NC_000913.3"/>
</dbReference>
<dbReference type="RefSeq" id="WP_000003071.1">
    <property type="nucleotide sequence ID" value="NZ_SSZK01000003.1"/>
</dbReference>
<dbReference type="PDB" id="1BBU">
    <property type="method" value="X-ray"/>
    <property type="resolution" value="2.70 A"/>
    <property type="chains" value="A=2-505"/>
</dbReference>
<dbReference type="PDB" id="1BBW">
    <property type="method" value="X-ray"/>
    <property type="resolution" value="2.70 A"/>
    <property type="chains" value="A=2-505"/>
</dbReference>
<dbReference type="PDB" id="1KRS">
    <property type="method" value="NMR"/>
    <property type="chains" value="A=31-149"/>
</dbReference>
<dbReference type="PDB" id="1KRT">
    <property type="method" value="NMR"/>
    <property type="chains" value="A=31-149"/>
</dbReference>
<dbReference type="PDBsum" id="1BBU"/>
<dbReference type="PDBsum" id="1BBW"/>
<dbReference type="PDBsum" id="1KRS"/>
<dbReference type="PDBsum" id="1KRT"/>
<dbReference type="BMRB" id="P0A8N3"/>
<dbReference type="SMR" id="P0A8N3"/>
<dbReference type="BioGRID" id="4262337">
    <property type="interactions" value="597"/>
</dbReference>
<dbReference type="DIP" id="DIP-36211N"/>
<dbReference type="FunCoup" id="P0A8N3">
    <property type="interactions" value="967"/>
</dbReference>
<dbReference type="IntAct" id="P0A8N3">
    <property type="interactions" value="25"/>
</dbReference>
<dbReference type="STRING" id="511145.b2890"/>
<dbReference type="jPOST" id="P0A8N3"/>
<dbReference type="PaxDb" id="511145-b2890"/>
<dbReference type="EnsemblBacteria" id="AAC75928">
    <property type="protein sequence ID" value="AAC75928"/>
    <property type="gene ID" value="b2890"/>
</dbReference>
<dbReference type="GeneID" id="947372"/>
<dbReference type="KEGG" id="ecj:JW2858"/>
<dbReference type="KEGG" id="eco:b2890"/>
<dbReference type="KEGG" id="ecoc:C3026_15850"/>
<dbReference type="PATRIC" id="fig|1411691.4.peg.3844"/>
<dbReference type="EchoBASE" id="EB0547"/>
<dbReference type="eggNOG" id="COG1190">
    <property type="taxonomic scope" value="Bacteria"/>
</dbReference>
<dbReference type="HOGENOM" id="CLU_008255_6_0_6"/>
<dbReference type="InParanoid" id="P0A8N3"/>
<dbReference type="OMA" id="DFRNEGM"/>
<dbReference type="OrthoDB" id="9801152at2"/>
<dbReference type="PhylomeDB" id="P0A8N3"/>
<dbReference type="BioCyc" id="EcoCyc:LYSS-MONOMER"/>
<dbReference type="BioCyc" id="MetaCyc:LYSS-MONOMER"/>
<dbReference type="BRENDA" id="6.1.1.6">
    <property type="organism ID" value="2026"/>
</dbReference>
<dbReference type="EvolutionaryTrace" id="P0A8N3"/>
<dbReference type="PRO" id="PR:P0A8N3"/>
<dbReference type="Proteomes" id="UP000000625">
    <property type="component" value="Chromosome"/>
</dbReference>
<dbReference type="GO" id="GO:0005737">
    <property type="term" value="C:cytoplasm"/>
    <property type="evidence" value="ECO:0000318"/>
    <property type="project" value="GO_Central"/>
</dbReference>
<dbReference type="GO" id="GO:0005829">
    <property type="term" value="C:cytosol"/>
    <property type="evidence" value="ECO:0000314"/>
    <property type="project" value="EcoCyc"/>
</dbReference>
<dbReference type="GO" id="GO:0016020">
    <property type="term" value="C:membrane"/>
    <property type="evidence" value="ECO:0007005"/>
    <property type="project" value="UniProtKB"/>
</dbReference>
<dbReference type="GO" id="GO:0005524">
    <property type="term" value="F:ATP binding"/>
    <property type="evidence" value="ECO:0007669"/>
    <property type="project" value="UniProtKB-UniRule"/>
</dbReference>
<dbReference type="GO" id="GO:0016874">
    <property type="term" value="F:ligase activity"/>
    <property type="evidence" value="ECO:0000314"/>
    <property type="project" value="EcoliWiki"/>
</dbReference>
<dbReference type="GO" id="GO:0004824">
    <property type="term" value="F:lysine-tRNA ligase activity"/>
    <property type="evidence" value="ECO:0000314"/>
    <property type="project" value="EcoCyc"/>
</dbReference>
<dbReference type="GO" id="GO:0000287">
    <property type="term" value="F:magnesium ion binding"/>
    <property type="evidence" value="ECO:0007669"/>
    <property type="project" value="UniProtKB-UniRule"/>
</dbReference>
<dbReference type="GO" id="GO:0042803">
    <property type="term" value="F:protein homodimerization activity"/>
    <property type="evidence" value="ECO:0000314"/>
    <property type="project" value="EcoCyc"/>
</dbReference>
<dbReference type="GO" id="GO:0000049">
    <property type="term" value="F:tRNA binding"/>
    <property type="evidence" value="ECO:0000318"/>
    <property type="project" value="GO_Central"/>
</dbReference>
<dbReference type="GO" id="GO:0006430">
    <property type="term" value="P:lysyl-tRNA aminoacylation"/>
    <property type="evidence" value="ECO:0000316"/>
    <property type="project" value="EcoliWiki"/>
</dbReference>
<dbReference type="GO" id="GO:0006418">
    <property type="term" value="P:tRNA aminoacylation for protein translation"/>
    <property type="evidence" value="ECO:0000316"/>
    <property type="project" value="EcoliWiki"/>
</dbReference>
<dbReference type="CDD" id="cd00775">
    <property type="entry name" value="LysRS_core"/>
    <property type="match status" value="1"/>
</dbReference>
<dbReference type="CDD" id="cd04322">
    <property type="entry name" value="LysRS_N"/>
    <property type="match status" value="1"/>
</dbReference>
<dbReference type="FunFam" id="2.40.50.140:FF:000024">
    <property type="entry name" value="Lysine--tRNA ligase"/>
    <property type="match status" value="1"/>
</dbReference>
<dbReference type="FunFam" id="3.30.930.10:FF:000001">
    <property type="entry name" value="Lysine--tRNA ligase"/>
    <property type="match status" value="1"/>
</dbReference>
<dbReference type="Gene3D" id="3.30.930.10">
    <property type="entry name" value="Bira Bifunctional Protein, Domain 2"/>
    <property type="match status" value="1"/>
</dbReference>
<dbReference type="Gene3D" id="2.40.50.140">
    <property type="entry name" value="Nucleic acid-binding proteins"/>
    <property type="match status" value="1"/>
</dbReference>
<dbReference type="HAMAP" id="MF_00252">
    <property type="entry name" value="Lys_tRNA_synth_class2"/>
    <property type="match status" value="1"/>
</dbReference>
<dbReference type="InterPro" id="IPR004364">
    <property type="entry name" value="Aa-tRNA-synt_II"/>
</dbReference>
<dbReference type="InterPro" id="IPR006195">
    <property type="entry name" value="aa-tRNA-synth_II"/>
</dbReference>
<dbReference type="InterPro" id="IPR045864">
    <property type="entry name" value="aa-tRNA-synth_II/BPL/LPL"/>
</dbReference>
<dbReference type="InterPro" id="IPR002313">
    <property type="entry name" value="Lys-tRNA-ligase_II"/>
</dbReference>
<dbReference type="InterPro" id="IPR034762">
    <property type="entry name" value="Lys-tRNA-ligase_II_bac/euk"/>
</dbReference>
<dbReference type="InterPro" id="IPR044136">
    <property type="entry name" value="Lys-tRNA-ligase_II_N"/>
</dbReference>
<dbReference type="InterPro" id="IPR018149">
    <property type="entry name" value="Lys-tRNA-synth_II_C"/>
</dbReference>
<dbReference type="InterPro" id="IPR012340">
    <property type="entry name" value="NA-bd_OB-fold"/>
</dbReference>
<dbReference type="InterPro" id="IPR004365">
    <property type="entry name" value="NA-bd_OB_tRNA"/>
</dbReference>
<dbReference type="NCBIfam" id="TIGR00499">
    <property type="entry name" value="lysS_bact"/>
    <property type="match status" value="1"/>
</dbReference>
<dbReference type="NCBIfam" id="NF001756">
    <property type="entry name" value="PRK00484.1"/>
    <property type="match status" value="1"/>
</dbReference>
<dbReference type="NCBIfam" id="NF009101">
    <property type="entry name" value="PRK12445.1"/>
    <property type="match status" value="1"/>
</dbReference>
<dbReference type="PANTHER" id="PTHR42918:SF15">
    <property type="entry name" value="LYSINE--TRNA LIGASE, CHLOROPLASTIC_MITOCHONDRIAL"/>
    <property type="match status" value="1"/>
</dbReference>
<dbReference type="PANTHER" id="PTHR42918">
    <property type="entry name" value="LYSYL-TRNA SYNTHETASE"/>
    <property type="match status" value="1"/>
</dbReference>
<dbReference type="Pfam" id="PF00152">
    <property type="entry name" value="tRNA-synt_2"/>
    <property type="match status" value="1"/>
</dbReference>
<dbReference type="Pfam" id="PF01336">
    <property type="entry name" value="tRNA_anti-codon"/>
    <property type="match status" value="1"/>
</dbReference>
<dbReference type="PIRSF" id="PIRSF039101">
    <property type="entry name" value="LysRS2"/>
    <property type="match status" value="1"/>
</dbReference>
<dbReference type="PRINTS" id="PR00982">
    <property type="entry name" value="TRNASYNTHLYS"/>
</dbReference>
<dbReference type="SUPFAM" id="SSF55681">
    <property type="entry name" value="Class II aaRS and biotin synthetases"/>
    <property type="match status" value="1"/>
</dbReference>
<dbReference type="SUPFAM" id="SSF50249">
    <property type="entry name" value="Nucleic acid-binding proteins"/>
    <property type="match status" value="1"/>
</dbReference>
<dbReference type="PROSITE" id="PS50862">
    <property type="entry name" value="AA_TRNA_LIGASE_II"/>
    <property type="match status" value="1"/>
</dbReference>
<comment type="catalytic activity">
    <reaction>
        <text>tRNA(Lys) + L-lysine + ATP = L-lysyl-tRNA(Lys) + AMP + diphosphate</text>
        <dbReference type="Rhea" id="RHEA:20792"/>
        <dbReference type="Rhea" id="RHEA-COMP:9696"/>
        <dbReference type="Rhea" id="RHEA-COMP:9697"/>
        <dbReference type="ChEBI" id="CHEBI:30616"/>
        <dbReference type="ChEBI" id="CHEBI:32551"/>
        <dbReference type="ChEBI" id="CHEBI:33019"/>
        <dbReference type="ChEBI" id="CHEBI:78442"/>
        <dbReference type="ChEBI" id="CHEBI:78529"/>
        <dbReference type="ChEBI" id="CHEBI:456215"/>
        <dbReference type="EC" id="6.1.1.6"/>
    </reaction>
</comment>
<comment type="cofactor">
    <cofactor evidence="1">
        <name>Mg(2+)</name>
        <dbReference type="ChEBI" id="CHEBI:18420"/>
    </cofactor>
    <text evidence="1">Binds 3 Mg(2+) ions per subunit.</text>
</comment>
<comment type="subunit">
    <text>Homodimer.</text>
</comment>
<comment type="interaction">
    <interactant intactId="EBI-552719">
        <id>P0A8N3</id>
    </interactant>
    <interactant intactId="EBI-552654">
        <id>P0AAM3</id>
        <label>hypC</label>
    </interactant>
    <organismsDiffer>false</organismsDiffer>
    <experiments>3</experiments>
</comment>
<comment type="interaction">
    <interactant intactId="EBI-552719">
        <id>P0A8N3</id>
    </interactant>
    <interactant intactId="EBI-559429">
        <id>P43672</id>
        <label>uup</label>
    </interactant>
    <organismsDiffer>false</organismsDiffer>
    <experiments>2</experiments>
</comment>
<comment type="subcellular location">
    <subcellularLocation>
        <location>Cytoplasm</location>
    </subcellularLocation>
</comment>
<comment type="miscellaneous">
    <text>There are two lysyl-tRNA ligases in E.coli: lysS is expressed constitutively, while lysU is heat inducible.</text>
</comment>
<comment type="similarity">
    <text evidence="3">Belongs to the class-II aminoacyl-tRNA synthetase family.</text>
</comment>
<reference key="1">
    <citation type="journal article" date="1988" name="Proc. Natl. Acad. Sci. U.S.A.">
        <title>Chromosomal location and structure of the operon encoding peptide-chain-release factor 2 of Escherichia coli.</title>
        <authorList>
            <person name="Kawakami K."/>
            <person name="Joensson Y.H."/>
            <person name="Bjoerk G.R."/>
            <person name="Ikeda H."/>
            <person name="Nakamura Y."/>
        </authorList>
    </citation>
    <scope>NUCLEOTIDE SEQUENCE [GENOMIC DNA]</scope>
</reference>
<reference key="2">
    <citation type="journal article" date="1990" name="Nucleic Acids Res.">
        <title>Homology of lysS and lysU, the two Escherichia coli genes encoding distinct lysyl-tRNA synthetase species.</title>
        <authorList>
            <person name="Leveque F."/>
            <person name="Plateau P."/>
            <person name="Dessen P."/>
            <person name="Blanquet S."/>
        </authorList>
    </citation>
    <scope>NUCLEOTIDE SEQUENCE [GENOMIC DNA]</scope>
    <scope>PROTEIN SEQUENCE OF 2-28</scope>
</reference>
<reference key="3">
    <citation type="journal article" date="1997" name="Science">
        <title>The complete genome sequence of Escherichia coli K-12.</title>
        <authorList>
            <person name="Blattner F.R."/>
            <person name="Plunkett G. III"/>
            <person name="Bloch C.A."/>
            <person name="Perna N.T."/>
            <person name="Burland V."/>
            <person name="Riley M."/>
            <person name="Collado-Vides J."/>
            <person name="Glasner J.D."/>
            <person name="Rode C.K."/>
            <person name="Mayhew G.F."/>
            <person name="Gregor J."/>
            <person name="Davis N.W."/>
            <person name="Kirkpatrick H.A."/>
            <person name="Goeden M.A."/>
            <person name="Rose D.J."/>
            <person name="Mau B."/>
            <person name="Shao Y."/>
        </authorList>
    </citation>
    <scope>NUCLEOTIDE SEQUENCE [LARGE SCALE GENOMIC DNA]</scope>
    <source>
        <strain>K12 / MG1655 / ATCC 47076</strain>
    </source>
</reference>
<reference key="4">
    <citation type="journal article" date="2006" name="Mol. Syst. Biol.">
        <title>Highly accurate genome sequences of Escherichia coli K-12 strains MG1655 and W3110.</title>
        <authorList>
            <person name="Hayashi K."/>
            <person name="Morooka N."/>
            <person name="Yamamoto Y."/>
            <person name="Fujita K."/>
            <person name="Isono K."/>
            <person name="Choi S."/>
            <person name="Ohtsubo E."/>
            <person name="Baba T."/>
            <person name="Wanner B.L."/>
            <person name="Mori H."/>
            <person name="Horiuchi T."/>
        </authorList>
    </citation>
    <scope>NUCLEOTIDE SEQUENCE [LARGE SCALE GENOMIC DNA]</scope>
    <source>
        <strain>K12 / W3110 / ATCC 27325 / DSM 5911</strain>
    </source>
</reference>
<reference key="5">
    <citation type="journal article" date="1997" name="Electrophoresis">
        <title>Escherichia coli proteome analysis using the gene-protein database.</title>
        <authorList>
            <person name="VanBogelen R.A."/>
            <person name="Abshire K.Z."/>
            <person name="Moldover B."/>
            <person name="Olson E.R."/>
            <person name="Neidhardt F.C."/>
        </authorList>
    </citation>
    <scope>IDENTIFICATION BY 2D-GEL</scope>
</reference>
<reference key="6">
    <citation type="journal article" date="1995" name="J. Mol. Biol.">
        <title>Solution structure of the anticodon-binding domain of Escherichia coli lysyl-tRNA synthetase and studies of its interaction with tRNA(Lys).</title>
        <authorList>
            <person name="Commans S."/>
            <person name="Plateau P."/>
            <person name="Blanquet S."/>
            <person name="Dardel F."/>
        </authorList>
    </citation>
    <scope>STRUCTURE BY NMR</scope>
</reference>
<organism>
    <name type="scientific">Escherichia coli (strain K12)</name>
    <dbReference type="NCBI Taxonomy" id="83333"/>
    <lineage>
        <taxon>Bacteria</taxon>
        <taxon>Pseudomonadati</taxon>
        <taxon>Pseudomonadota</taxon>
        <taxon>Gammaproteobacteria</taxon>
        <taxon>Enterobacterales</taxon>
        <taxon>Enterobacteriaceae</taxon>
        <taxon>Escherichia</taxon>
    </lineage>
</organism>
<sequence length="505" mass="57603">MSEQHAQGADAVVDLNNELKTRREKLANLREQGIAFPNDFRRDHTSDQLHAEFDGKENEELEALNIEVAVAGRMMTRRIMGKASFVTLQDVGGRIQLYVARDDLPEGVYNEQFKKWDLGDILGAKGKLFKTKTGELSIHCTELRLLTKALRPLPDKFHGLQDQEARYRQRYLDLISNDESRNTFKVRSQILSGIRQFMVNRGFMEVETPMMQVIPGGAAARPFITHHNALDLDMYLRIAPELYLKRLVVGGFERVFEINRNFRNEGISVRHNPEFTMMELYMAYADYKDLIELTESLFRTLAQDILGKTEVTYGDVTLDFGKPFEKLTMREAIKKYRPETDMADLDNFDSAKAIAESIGIHVEKSWGLGRIVTEIFEEVAEAHLIQPTFITEYPAEVSPLARRNDVNPEITDRFEFFIGGREIGNGFSELNDAEDQAQRFLDQVAAKDAGDDEAMFYDEDYVTALEHGLPPTAGLGIGIDRMVMLFTNSHTIRDVILFPAMRPVK</sequence>
<gene>
    <name type="primary">lysS</name>
    <name type="synonym">asuD</name>
    <name type="synonym">herC</name>
    <name type="ordered locus">b2890</name>
    <name type="ordered locus">JW2858</name>
</gene>
<proteinExistence type="evidence at protein level"/>
<accession>P0A8N3</accession>
<accession>P13030</accession>
<accession>Q2M9V1</accession>
<evidence type="ECO:0000250" key="1"/>
<evidence type="ECO:0000269" key="2">
    <source>
    </source>
</evidence>
<evidence type="ECO:0000305" key="3"/>
<evidence type="ECO:0007829" key="4">
    <source>
        <dbReference type="PDB" id="1BBU"/>
    </source>
</evidence>
<evidence type="ECO:0007829" key="5">
    <source>
        <dbReference type="PDB" id="1BBW"/>
    </source>
</evidence>
<evidence type="ECO:0007829" key="6">
    <source>
        <dbReference type="PDB" id="1KRS"/>
    </source>
</evidence>